<protein>
    <recommendedName>
        <fullName evidence="1">Small ribosomal subunit protein uS19</fullName>
    </recommendedName>
    <alternativeName>
        <fullName evidence="2">30S ribosomal protein S19</fullName>
    </alternativeName>
</protein>
<sequence length="94" mass="10908">MSRSVKKGPYIQEVLLKRINEMNKNGEKKVLKTWSRSSTIFPQMIGHTIAVHDGRKHVPVYITEDMVGHKLGEFVLTRTYRGHDDKSEKSSRLR</sequence>
<proteinExistence type="inferred from homology"/>
<reference key="1">
    <citation type="journal article" date="2007" name="PLoS ONE">
        <title>Analysis of the neurotoxin complex genes in Clostridium botulinum A1-A4 and B1 strains: BoNT/A3, /Ba4 and /B1 clusters are located within plasmids.</title>
        <authorList>
            <person name="Smith T.J."/>
            <person name="Hill K.K."/>
            <person name="Foley B.T."/>
            <person name="Detter J.C."/>
            <person name="Munk A.C."/>
            <person name="Bruce D.C."/>
            <person name="Doggett N.A."/>
            <person name="Smith L.A."/>
            <person name="Marks J.D."/>
            <person name="Xie G."/>
            <person name="Brettin T.S."/>
        </authorList>
    </citation>
    <scope>NUCLEOTIDE SEQUENCE [LARGE SCALE GENOMIC DNA]</scope>
    <source>
        <strain>Okra / Type B1</strain>
    </source>
</reference>
<accession>B1IGF0</accession>
<keyword id="KW-0687">Ribonucleoprotein</keyword>
<keyword id="KW-0689">Ribosomal protein</keyword>
<keyword id="KW-0694">RNA-binding</keyword>
<keyword id="KW-0699">rRNA-binding</keyword>
<comment type="function">
    <text evidence="1">Protein S19 forms a complex with S13 that binds strongly to the 16S ribosomal RNA.</text>
</comment>
<comment type="similarity">
    <text evidence="1">Belongs to the universal ribosomal protein uS19 family.</text>
</comment>
<gene>
    <name evidence="1" type="primary">rpsS</name>
    <name type="ordered locus">CLD_1028</name>
</gene>
<evidence type="ECO:0000255" key="1">
    <source>
        <dbReference type="HAMAP-Rule" id="MF_00531"/>
    </source>
</evidence>
<evidence type="ECO:0000305" key="2"/>
<name>RS19_CLOBK</name>
<dbReference type="EMBL" id="CP000939">
    <property type="protein sequence ID" value="ACA43940.1"/>
    <property type="molecule type" value="Genomic_DNA"/>
</dbReference>
<dbReference type="RefSeq" id="WP_003360195.1">
    <property type="nucleotide sequence ID" value="NC_010516.1"/>
</dbReference>
<dbReference type="SMR" id="B1IGF0"/>
<dbReference type="KEGG" id="cbb:CLD_1028"/>
<dbReference type="HOGENOM" id="CLU_144911_0_1_9"/>
<dbReference type="Proteomes" id="UP000008541">
    <property type="component" value="Chromosome"/>
</dbReference>
<dbReference type="GO" id="GO:0005737">
    <property type="term" value="C:cytoplasm"/>
    <property type="evidence" value="ECO:0007669"/>
    <property type="project" value="UniProtKB-ARBA"/>
</dbReference>
<dbReference type="GO" id="GO:0015935">
    <property type="term" value="C:small ribosomal subunit"/>
    <property type="evidence" value="ECO:0007669"/>
    <property type="project" value="InterPro"/>
</dbReference>
<dbReference type="GO" id="GO:0019843">
    <property type="term" value="F:rRNA binding"/>
    <property type="evidence" value="ECO:0007669"/>
    <property type="project" value="UniProtKB-UniRule"/>
</dbReference>
<dbReference type="GO" id="GO:0003735">
    <property type="term" value="F:structural constituent of ribosome"/>
    <property type="evidence" value="ECO:0007669"/>
    <property type="project" value="InterPro"/>
</dbReference>
<dbReference type="GO" id="GO:0000028">
    <property type="term" value="P:ribosomal small subunit assembly"/>
    <property type="evidence" value="ECO:0007669"/>
    <property type="project" value="TreeGrafter"/>
</dbReference>
<dbReference type="GO" id="GO:0006412">
    <property type="term" value="P:translation"/>
    <property type="evidence" value="ECO:0007669"/>
    <property type="project" value="UniProtKB-UniRule"/>
</dbReference>
<dbReference type="FunFam" id="3.30.860.10:FF:000001">
    <property type="entry name" value="30S ribosomal protein S19"/>
    <property type="match status" value="1"/>
</dbReference>
<dbReference type="Gene3D" id="3.30.860.10">
    <property type="entry name" value="30s Ribosomal Protein S19, Chain A"/>
    <property type="match status" value="1"/>
</dbReference>
<dbReference type="HAMAP" id="MF_00531">
    <property type="entry name" value="Ribosomal_uS19"/>
    <property type="match status" value="1"/>
</dbReference>
<dbReference type="InterPro" id="IPR002222">
    <property type="entry name" value="Ribosomal_uS19"/>
</dbReference>
<dbReference type="InterPro" id="IPR005732">
    <property type="entry name" value="Ribosomal_uS19_bac-type"/>
</dbReference>
<dbReference type="InterPro" id="IPR020934">
    <property type="entry name" value="Ribosomal_uS19_CS"/>
</dbReference>
<dbReference type="InterPro" id="IPR023575">
    <property type="entry name" value="Ribosomal_uS19_SF"/>
</dbReference>
<dbReference type="NCBIfam" id="TIGR01050">
    <property type="entry name" value="rpsS_bact"/>
    <property type="match status" value="1"/>
</dbReference>
<dbReference type="PANTHER" id="PTHR11880">
    <property type="entry name" value="RIBOSOMAL PROTEIN S19P FAMILY MEMBER"/>
    <property type="match status" value="1"/>
</dbReference>
<dbReference type="PANTHER" id="PTHR11880:SF8">
    <property type="entry name" value="SMALL RIBOSOMAL SUBUNIT PROTEIN US19M"/>
    <property type="match status" value="1"/>
</dbReference>
<dbReference type="Pfam" id="PF00203">
    <property type="entry name" value="Ribosomal_S19"/>
    <property type="match status" value="1"/>
</dbReference>
<dbReference type="PIRSF" id="PIRSF002144">
    <property type="entry name" value="Ribosomal_S19"/>
    <property type="match status" value="1"/>
</dbReference>
<dbReference type="PRINTS" id="PR00975">
    <property type="entry name" value="RIBOSOMALS19"/>
</dbReference>
<dbReference type="SUPFAM" id="SSF54570">
    <property type="entry name" value="Ribosomal protein S19"/>
    <property type="match status" value="1"/>
</dbReference>
<dbReference type="PROSITE" id="PS00323">
    <property type="entry name" value="RIBOSOMAL_S19"/>
    <property type="match status" value="1"/>
</dbReference>
<feature type="chain" id="PRO_1000127953" description="Small ribosomal subunit protein uS19">
    <location>
        <begin position="1"/>
        <end position="94"/>
    </location>
</feature>
<organism>
    <name type="scientific">Clostridium botulinum (strain Okra / Type B1)</name>
    <dbReference type="NCBI Taxonomy" id="498213"/>
    <lineage>
        <taxon>Bacteria</taxon>
        <taxon>Bacillati</taxon>
        <taxon>Bacillota</taxon>
        <taxon>Clostridia</taxon>
        <taxon>Eubacteriales</taxon>
        <taxon>Clostridiaceae</taxon>
        <taxon>Clostridium</taxon>
    </lineage>
</organism>